<reference key="1">
    <citation type="journal article" date="2005" name="Nature">
        <title>The map-based sequence of the rice genome.</title>
        <authorList>
            <consortium name="International rice genome sequencing project (IRGSP)"/>
        </authorList>
    </citation>
    <scope>NUCLEOTIDE SEQUENCE [LARGE SCALE GENOMIC DNA]</scope>
    <source>
        <strain>cv. Nipponbare</strain>
    </source>
</reference>
<reference key="2">
    <citation type="journal article" date="2008" name="Nucleic Acids Res.">
        <title>The rice annotation project database (RAP-DB): 2008 update.</title>
        <authorList>
            <consortium name="The rice annotation project (RAP)"/>
        </authorList>
    </citation>
    <scope>GENOME REANNOTATION</scope>
    <source>
        <strain>cv. Nipponbare</strain>
    </source>
</reference>
<reference key="3">
    <citation type="journal article" date="2013" name="Rice">
        <title>Improvement of the Oryza sativa Nipponbare reference genome using next generation sequence and optical map data.</title>
        <authorList>
            <person name="Kawahara Y."/>
            <person name="de la Bastide M."/>
            <person name="Hamilton J.P."/>
            <person name="Kanamori H."/>
            <person name="McCombie W.R."/>
            <person name="Ouyang S."/>
            <person name="Schwartz D.C."/>
            <person name="Tanaka T."/>
            <person name="Wu J."/>
            <person name="Zhou S."/>
            <person name="Childs K.L."/>
            <person name="Davidson R.M."/>
            <person name="Lin H."/>
            <person name="Quesada-Ocampo L."/>
            <person name="Vaillancourt B."/>
            <person name="Sakai H."/>
            <person name="Lee S.S."/>
            <person name="Kim J."/>
            <person name="Numa H."/>
            <person name="Itoh T."/>
            <person name="Buell C.R."/>
            <person name="Matsumoto T."/>
        </authorList>
    </citation>
    <scope>GENOME REANNOTATION</scope>
    <source>
        <strain>cv. Nipponbare</strain>
    </source>
</reference>
<reference key="4">
    <citation type="journal article" date="2005" name="PLoS Biol.">
        <title>The genomes of Oryza sativa: a history of duplications.</title>
        <authorList>
            <person name="Yu J."/>
            <person name="Wang J."/>
            <person name="Lin W."/>
            <person name="Li S."/>
            <person name="Li H."/>
            <person name="Zhou J."/>
            <person name="Ni P."/>
            <person name="Dong W."/>
            <person name="Hu S."/>
            <person name="Zeng C."/>
            <person name="Zhang J."/>
            <person name="Zhang Y."/>
            <person name="Li R."/>
            <person name="Xu Z."/>
            <person name="Li S."/>
            <person name="Li X."/>
            <person name="Zheng H."/>
            <person name="Cong L."/>
            <person name="Lin L."/>
            <person name="Yin J."/>
            <person name="Geng J."/>
            <person name="Li G."/>
            <person name="Shi J."/>
            <person name="Liu J."/>
            <person name="Lv H."/>
            <person name="Li J."/>
            <person name="Wang J."/>
            <person name="Deng Y."/>
            <person name="Ran L."/>
            <person name="Shi X."/>
            <person name="Wang X."/>
            <person name="Wu Q."/>
            <person name="Li C."/>
            <person name="Ren X."/>
            <person name="Wang J."/>
            <person name="Wang X."/>
            <person name="Li D."/>
            <person name="Liu D."/>
            <person name="Zhang X."/>
            <person name="Ji Z."/>
            <person name="Zhao W."/>
            <person name="Sun Y."/>
            <person name="Zhang Z."/>
            <person name="Bao J."/>
            <person name="Han Y."/>
            <person name="Dong L."/>
            <person name="Ji J."/>
            <person name="Chen P."/>
            <person name="Wu S."/>
            <person name="Liu J."/>
            <person name="Xiao Y."/>
            <person name="Bu D."/>
            <person name="Tan J."/>
            <person name="Yang L."/>
            <person name="Ye C."/>
            <person name="Zhang J."/>
            <person name="Xu J."/>
            <person name="Zhou Y."/>
            <person name="Yu Y."/>
            <person name="Zhang B."/>
            <person name="Zhuang S."/>
            <person name="Wei H."/>
            <person name="Liu B."/>
            <person name="Lei M."/>
            <person name="Yu H."/>
            <person name="Li Y."/>
            <person name="Xu H."/>
            <person name="Wei S."/>
            <person name="He X."/>
            <person name="Fang L."/>
            <person name="Zhang Z."/>
            <person name="Zhang Y."/>
            <person name="Huang X."/>
            <person name="Su Z."/>
            <person name="Tong W."/>
            <person name="Li J."/>
            <person name="Tong Z."/>
            <person name="Li S."/>
            <person name="Ye J."/>
            <person name="Wang L."/>
            <person name="Fang L."/>
            <person name="Lei T."/>
            <person name="Chen C.-S."/>
            <person name="Chen H.-C."/>
            <person name="Xu Z."/>
            <person name="Li H."/>
            <person name="Huang H."/>
            <person name="Zhang F."/>
            <person name="Xu H."/>
            <person name="Li N."/>
            <person name="Zhao C."/>
            <person name="Li S."/>
            <person name="Dong L."/>
            <person name="Huang Y."/>
            <person name="Li L."/>
            <person name="Xi Y."/>
            <person name="Qi Q."/>
            <person name="Li W."/>
            <person name="Zhang B."/>
            <person name="Hu W."/>
            <person name="Zhang Y."/>
            <person name="Tian X."/>
            <person name="Jiao Y."/>
            <person name="Liang X."/>
            <person name="Jin J."/>
            <person name="Gao L."/>
            <person name="Zheng W."/>
            <person name="Hao B."/>
            <person name="Liu S.-M."/>
            <person name="Wang W."/>
            <person name="Yuan L."/>
            <person name="Cao M."/>
            <person name="McDermott J."/>
            <person name="Samudrala R."/>
            <person name="Wang J."/>
            <person name="Wong G.K.-S."/>
            <person name="Yang H."/>
        </authorList>
    </citation>
    <scope>NUCLEOTIDE SEQUENCE [LARGE SCALE GENOMIC DNA]</scope>
    <source>
        <strain>cv. Nipponbare</strain>
    </source>
</reference>
<reference key="5">
    <citation type="journal article" date="2005" name="Plant Mol. Biol.">
        <title>Structural, functional, and phylogenetic characterization of a large CBF gene family in barley.</title>
        <authorList>
            <person name="Skinner J.S."/>
            <person name="von Zitzewitz J."/>
            <person name="Szuecs P."/>
            <person name="Marquez-Cedillo L."/>
            <person name="Filichkin T."/>
            <person name="Amundsen K."/>
            <person name="Stockinger E.J."/>
            <person name="Thomashow M.F."/>
            <person name="Chen T.H.H."/>
            <person name="Hayes P.M."/>
        </authorList>
    </citation>
    <scope>GENE FAMILY</scope>
    <source>
        <strain>cv. Nipponbare</strain>
    </source>
</reference>
<reference key="6">
    <citation type="journal article" date="2006" name="Plant Physiol.">
        <title>Genome-wide analysis of the ERF gene family in Arabidopsis and rice.</title>
        <authorList>
            <person name="Nakano T."/>
            <person name="Suzuki K."/>
            <person name="Fujimura T."/>
            <person name="Shinshi H."/>
        </authorList>
    </citation>
    <scope>GENE FAMILY</scope>
    <scope>NOMENCLATURE</scope>
</reference>
<comment type="function">
    <text evidence="1">Transcriptional activator that binds specifically to the DNA sequence 5'-[AG]CCGAC-3'. Binding to the C-repeat/DRE element mediates high salinity- and dehydration-inducible transcription (By similarity).</text>
</comment>
<comment type="subcellular location">
    <subcellularLocation>
        <location evidence="4">Nucleus</location>
    </subcellularLocation>
</comment>
<comment type="similarity">
    <text evidence="4">Belongs to the AP2/ERF transcription factor family. ERF subfamily.</text>
</comment>
<comment type="sequence caution" evidence="4">
    <conflict type="erroneous gene model prediction">
        <sequence resource="EMBL-CDS" id="BAD09224"/>
    </conflict>
</comment>
<comment type="sequence caution" evidence="4">
    <conflict type="erroneous gene model prediction">
        <sequence resource="EMBL-CDS" id="BAD09738"/>
    </conflict>
</comment>
<comment type="sequence caution" evidence="4">
    <conflict type="erroneous gene model prediction">
        <sequence resource="EMBL-CDS" id="BAF24328"/>
    </conflict>
</comment>
<protein>
    <recommendedName>
        <fullName>Dehydration-responsive element-binding protein 1J</fullName>
        <shortName>Protein DREB1J</shortName>
    </recommendedName>
</protein>
<dbReference type="EMBL" id="AP004163">
    <property type="protein sequence ID" value="BAD09224.1"/>
    <property type="status" value="ALT_SEQ"/>
    <property type="molecule type" value="Genomic_DNA"/>
</dbReference>
<dbReference type="EMBL" id="AP004632">
    <property type="protein sequence ID" value="BAD09738.1"/>
    <property type="status" value="ALT_SEQ"/>
    <property type="molecule type" value="Genomic_DNA"/>
</dbReference>
<dbReference type="EMBL" id="AP008214">
    <property type="protein sequence ID" value="BAF24328.2"/>
    <property type="status" value="ALT_SEQ"/>
    <property type="molecule type" value="Genomic_DNA"/>
</dbReference>
<dbReference type="EMBL" id="AP014964">
    <property type="status" value="NOT_ANNOTATED_CDS"/>
    <property type="molecule type" value="Genomic_DNA"/>
</dbReference>
<dbReference type="EMBL" id="CM000145">
    <property type="status" value="NOT_ANNOTATED_CDS"/>
    <property type="molecule type" value="Genomic_DNA"/>
</dbReference>
<dbReference type="RefSeq" id="XP_015649414.1">
    <property type="nucleotide sequence ID" value="XM_015793928.1"/>
</dbReference>
<dbReference type="SMR" id="Q0J3Y7"/>
<dbReference type="FunCoup" id="Q0J3Y7">
    <property type="interactions" value="4"/>
</dbReference>
<dbReference type="PaxDb" id="39947-Q0J3Y7"/>
<dbReference type="KEGG" id="dosa:Os08g0545400"/>
<dbReference type="eggNOG" id="ENOG502R5MM">
    <property type="taxonomic scope" value="Eukaryota"/>
</dbReference>
<dbReference type="InParanoid" id="Q0J3Y7"/>
<dbReference type="OrthoDB" id="688247at2759"/>
<dbReference type="Proteomes" id="UP000000763">
    <property type="component" value="Chromosome 8"/>
</dbReference>
<dbReference type="Proteomes" id="UP000007752">
    <property type="component" value="Chromosome 8"/>
</dbReference>
<dbReference type="Proteomes" id="UP000059680">
    <property type="component" value="Chromosome 8"/>
</dbReference>
<dbReference type="GO" id="GO:0005634">
    <property type="term" value="C:nucleus"/>
    <property type="evidence" value="ECO:0007669"/>
    <property type="project" value="UniProtKB-SubCell"/>
</dbReference>
<dbReference type="GO" id="GO:0003677">
    <property type="term" value="F:DNA binding"/>
    <property type="evidence" value="ECO:0007669"/>
    <property type="project" value="UniProtKB-KW"/>
</dbReference>
<dbReference type="GO" id="GO:0003700">
    <property type="term" value="F:DNA-binding transcription factor activity"/>
    <property type="evidence" value="ECO:0007669"/>
    <property type="project" value="InterPro"/>
</dbReference>
<dbReference type="CDD" id="cd00018">
    <property type="entry name" value="AP2"/>
    <property type="match status" value="1"/>
</dbReference>
<dbReference type="Gene3D" id="3.30.730.10">
    <property type="entry name" value="AP2/ERF domain"/>
    <property type="match status" value="1"/>
</dbReference>
<dbReference type="InterPro" id="IPR001471">
    <property type="entry name" value="AP2/ERF_dom"/>
</dbReference>
<dbReference type="InterPro" id="IPR036955">
    <property type="entry name" value="AP2/ERF_dom_sf"/>
</dbReference>
<dbReference type="InterPro" id="IPR016177">
    <property type="entry name" value="DNA-bd_dom_sf"/>
</dbReference>
<dbReference type="InterPro" id="IPR045277">
    <property type="entry name" value="DRE1A-I"/>
</dbReference>
<dbReference type="PANTHER" id="PTHR31839">
    <property type="entry name" value="DEHYDRATION-RESPONSIVE ELEMENT-BINDING PROTEIN 1D"/>
    <property type="match status" value="1"/>
</dbReference>
<dbReference type="PANTHER" id="PTHR31839:SF11">
    <property type="entry name" value="DEHYDRATION-RESPONSIVE ELEMENT-BINDING PROTEIN 1D"/>
    <property type="match status" value="1"/>
</dbReference>
<dbReference type="Pfam" id="PF00847">
    <property type="entry name" value="AP2"/>
    <property type="match status" value="1"/>
</dbReference>
<dbReference type="PRINTS" id="PR00367">
    <property type="entry name" value="ETHRSPELEMNT"/>
</dbReference>
<dbReference type="SMART" id="SM00380">
    <property type="entry name" value="AP2"/>
    <property type="match status" value="1"/>
</dbReference>
<dbReference type="SUPFAM" id="SSF54171">
    <property type="entry name" value="DNA-binding domain"/>
    <property type="match status" value="1"/>
</dbReference>
<dbReference type="PROSITE" id="PS51032">
    <property type="entry name" value="AP2_ERF"/>
    <property type="match status" value="1"/>
</dbReference>
<evidence type="ECO:0000250" key="1"/>
<evidence type="ECO:0000255" key="2">
    <source>
        <dbReference type="PROSITE-ProRule" id="PRU00366"/>
    </source>
</evidence>
<evidence type="ECO:0000256" key="3">
    <source>
        <dbReference type="SAM" id="MobiDB-lite"/>
    </source>
</evidence>
<evidence type="ECO:0000305" key="4"/>
<keyword id="KW-0010">Activator</keyword>
<keyword id="KW-0238">DNA-binding</keyword>
<keyword id="KW-0539">Nucleus</keyword>
<keyword id="KW-1185">Reference proteome</keyword>
<keyword id="KW-0346">Stress response</keyword>
<keyword id="KW-0804">Transcription</keyword>
<keyword id="KW-0805">Transcription regulation</keyword>
<proteinExistence type="inferred from homology"/>
<organism>
    <name type="scientific">Oryza sativa subsp. japonica</name>
    <name type="common">Rice</name>
    <dbReference type="NCBI Taxonomy" id="39947"/>
    <lineage>
        <taxon>Eukaryota</taxon>
        <taxon>Viridiplantae</taxon>
        <taxon>Streptophyta</taxon>
        <taxon>Embryophyta</taxon>
        <taxon>Tracheophyta</taxon>
        <taxon>Spermatophyta</taxon>
        <taxon>Magnoliopsida</taxon>
        <taxon>Liliopsida</taxon>
        <taxon>Poales</taxon>
        <taxon>Poaceae</taxon>
        <taxon>BOP clade</taxon>
        <taxon>Oryzoideae</taxon>
        <taxon>Oryzeae</taxon>
        <taxon>Oryzinae</taxon>
        <taxon>Oryza</taxon>
        <taxon>Oryza sativa</taxon>
    </lineage>
</organism>
<sequence length="242" mass="25158">MDVARDMEKNTTAMGQLMSSSATTAATATGPASPKRPAGRTKFQETRHPVFRGVRRRGRAGRWVCEVRVPGSRGDRLWVGTFDTAEEAARAHDAAMLALCGASASLNFADSAWLLHVPRAPVASGHDQLPDVQRAASEAVAEFQRRGSTAATATATSGDAASTAPPSSSPVLSPNDDNASSASTPAVAAALDHGDMFGGMRTDLYFASLAQGLLIEPPPPPTTAEGFCDDEGCGGAEMELWS</sequence>
<feature type="chain" id="PRO_0000323048" description="Dehydration-responsive element-binding protein 1J">
    <location>
        <begin position="1"/>
        <end position="242"/>
    </location>
</feature>
<feature type="DNA-binding region" description="AP2/ERF" evidence="2">
    <location>
        <begin position="50"/>
        <end position="109"/>
    </location>
</feature>
<feature type="region of interest" description="Disordered" evidence="3">
    <location>
        <begin position="20"/>
        <end position="44"/>
    </location>
</feature>
<feature type="region of interest" description="Disordered" evidence="3">
    <location>
        <begin position="143"/>
        <end position="184"/>
    </location>
</feature>
<feature type="compositionally biased region" description="Low complexity" evidence="3">
    <location>
        <begin position="20"/>
        <end position="29"/>
    </location>
</feature>
<feature type="compositionally biased region" description="Low complexity" evidence="3">
    <location>
        <begin position="148"/>
        <end position="184"/>
    </location>
</feature>
<accession>Q0J3Y7</accession>
<accession>A3BVF2</accession>
<accession>Q6ZBH0</accession>
<name>DRE1J_ORYSJ</name>
<gene>
    <name type="primary">DREB1J</name>
    <name type="synonym">ERF28</name>
    <name type="ordered locus">Os08g0545500</name>
    <name type="ordered locus">Os08g0545400</name>
    <name type="ordered locus">LOC_Os08g43200</name>
    <name type="ORF">OJ1323_A06.7</name>
    <name type="ORF">OsJ_027024</name>
    <name type="ORF">P0623F08.40</name>
</gene>